<feature type="chain" id="PRO_1000100360" description="Ribonuclease P protein component">
    <location>
        <begin position="1"/>
        <end position="116"/>
    </location>
</feature>
<keyword id="KW-0255">Endonuclease</keyword>
<keyword id="KW-0378">Hydrolase</keyword>
<keyword id="KW-0540">Nuclease</keyword>
<keyword id="KW-1185">Reference proteome</keyword>
<keyword id="KW-0694">RNA-binding</keyword>
<keyword id="KW-0819">tRNA processing</keyword>
<sequence>MKKEYRVKKDKEFQAVFTRGASVANRQFVVYALKKEQQTHFRIGLSVSKKIGNAVVRNQVKRYVREACQLHEASLAPNYDFVIIARNPAAKMTAQEVADSLRHVFKRSGVWKRQVK</sequence>
<proteinExistence type="inferred from homology"/>
<organism>
    <name type="scientific">Exiguobacterium sibiricum (strain DSM 17290 / CCUG 55495 / CIP 109462 / JCM 13490 / 255-15)</name>
    <dbReference type="NCBI Taxonomy" id="262543"/>
    <lineage>
        <taxon>Bacteria</taxon>
        <taxon>Bacillati</taxon>
        <taxon>Bacillota</taxon>
        <taxon>Bacilli</taxon>
        <taxon>Bacillales</taxon>
        <taxon>Bacillales Family XII. Incertae Sedis</taxon>
        <taxon>Exiguobacterium</taxon>
    </lineage>
</organism>
<dbReference type="EC" id="3.1.26.5" evidence="1"/>
<dbReference type="EMBL" id="CP001022">
    <property type="protein sequence ID" value="ACB62494.1"/>
    <property type="molecule type" value="Genomic_DNA"/>
</dbReference>
<dbReference type="RefSeq" id="WP_012371909.1">
    <property type="nucleotide sequence ID" value="NC_010556.1"/>
</dbReference>
<dbReference type="SMR" id="B1YGB0"/>
<dbReference type="STRING" id="262543.Exig_3049"/>
<dbReference type="KEGG" id="esi:Exig_3049"/>
<dbReference type="eggNOG" id="COG0594">
    <property type="taxonomic scope" value="Bacteria"/>
</dbReference>
<dbReference type="HOGENOM" id="CLU_117179_9_1_9"/>
<dbReference type="OrthoDB" id="9810867at2"/>
<dbReference type="Proteomes" id="UP000001681">
    <property type="component" value="Chromosome"/>
</dbReference>
<dbReference type="GO" id="GO:0030677">
    <property type="term" value="C:ribonuclease P complex"/>
    <property type="evidence" value="ECO:0007669"/>
    <property type="project" value="TreeGrafter"/>
</dbReference>
<dbReference type="GO" id="GO:0042781">
    <property type="term" value="F:3'-tRNA processing endoribonuclease activity"/>
    <property type="evidence" value="ECO:0007669"/>
    <property type="project" value="TreeGrafter"/>
</dbReference>
<dbReference type="GO" id="GO:0004526">
    <property type="term" value="F:ribonuclease P activity"/>
    <property type="evidence" value="ECO:0007669"/>
    <property type="project" value="UniProtKB-UniRule"/>
</dbReference>
<dbReference type="GO" id="GO:0000049">
    <property type="term" value="F:tRNA binding"/>
    <property type="evidence" value="ECO:0007669"/>
    <property type="project" value="UniProtKB-UniRule"/>
</dbReference>
<dbReference type="GO" id="GO:0001682">
    <property type="term" value="P:tRNA 5'-leader removal"/>
    <property type="evidence" value="ECO:0007669"/>
    <property type="project" value="UniProtKB-UniRule"/>
</dbReference>
<dbReference type="FunFam" id="3.30.230.10:FF:000021">
    <property type="entry name" value="Ribonuclease P protein component"/>
    <property type="match status" value="1"/>
</dbReference>
<dbReference type="Gene3D" id="3.30.230.10">
    <property type="match status" value="1"/>
</dbReference>
<dbReference type="HAMAP" id="MF_00227">
    <property type="entry name" value="RNase_P"/>
    <property type="match status" value="1"/>
</dbReference>
<dbReference type="InterPro" id="IPR020568">
    <property type="entry name" value="Ribosomal_Su5_D2-typ_SF"/>
</dbReference>
<dbReference type="InterPro" id="IPR014721">
    <property type="entry name" value="Ribsml_uS5_D2-typ_fold_subgr"/>
</dbReference>
<dbReference type="InterPro" id="IPR000100">
    <property type="entry name" value="RNase_P"/>
</dbReference>
<dbReference type="InterPro" id="IPR020539">
    <property type="entry name" value="RNase_P_CS"/>
</dbReference>
<dbReference type="NCBIfam" id="TIGR00188">
    <property type="entry name" value="rnpA"/>
    <property type="match status" value="1"/>
</dbReference>
<dbReference type="PANTHER" id="PTHR33992">
    <property type="entry name" value="RIBONUCLEASE P PROTEIN COMPONENT"/>
    <property type="match status" value="1"/>
</dbReference>
<dbReference type="PANTHER" id="PTHR33992:SF1">
    <property type="entry name" value="RIBONUCLEASE P PROTEIN COMPONENT"/>
    <property type="match status" value="1"/>
</dbReference>
<dbReference type="Pfam" id="PF00825">
    <property type="entry name" value="Ribonuclease_P"/>
    <property type="match status" value="1"/>
</dbReference>
<dbReference type="SUPFAM" id="SSF54211">
    <property type="entry name" value="Ribosomal protein S5 domain 2-like"/>
    <property type="match status" value="1"/>
</dbReference>
<dbReference type="PROSITE" id="PS00648">
    <property type="entry name" value="RIBONUCLEASE_P"/>
    <property type="match status" value="1"/>
</dbReference>
<gene>
    <name evidence="1" type="primary">rnpA</name>
    <name type="ordered locus">Exig_3049</name>
</gene>
<protein>
    <recommendedName>
        <fullName evidence="1">Ribonuclease P protein component</fullName>
        <shortName evidence="1">RNase P protein</shortName>
        <shortName evidence="1">RNaseP protein</shortName>
        <ecNumber evidence="1">3.1.26.5</ecNumber>
    </recommendedName>
    <alternativeName>
        <fullName evidence="1">Protein C5</fullName>
    </alternativeName>
</protein>
<name>RNPA_EXIS2</name>
<evidence type="ECO:0000255" key="1">
    <source>
        <dbReference type="HAMAP-Rule" id="MF_00227"/>
    </source>
</evidence>
<comment type="function">
    <text evidence="1">RNaseP catalyzes the removal of the 5'-leader sequence from pre-tRNA to produce the mature 5'-terminus. It can also cleave other RNA substrates such as 4.5S RNA. The protein component plays an auxiliary but essential role in vivo by binding to the 5'-leader sequence and broadening the substrate specificity of the ribozyme.</text>
</comment>
<comment type="catalytic activity">
    <reaction evidence="1">
        <text>Endonucleolytic cleavage of RNA, removing 5'-extranucleotides from tRNA precursor.</text>
        <dbReference type="EC" id="3.1.26.5"/>
    </reaction>
</comment>
<comment type="subunit">
    <text evidence="1">Consists of a catalytic RNA component (M1 or rnpB) and a protein subunit.</text>
</comment>
<comment type="similarity">
    <text evidence="1">Belongs to the RnpA family.</text>
</comment>
<accession>B1YGB0</accession>
<reference key="1">
    <citation type="submission" date="2008-04" db="EMBL/GenBank/DDBJ databases">
        <title>Complete sequence of chromosome of Exiguobacterium sibiricum 255-15.</title>
        <authorList>
            <consortium name="US DOE Joint Genome Institute"/>
            <person name="Copeland A."/>
            <person name="Lucas S."/>
            <person name="Lapidus A."/>
            <person name="Glavina del Rio T."/>
            <person name="Dalin E."/>
            <person name="Tice H."/>
            <person name="Bruce D."/>
            <person name="Goodwin L."/>
            <person name="Pitluck S."/>
            <person name="Kiss H."/>
            <person name="Chertkov O."/>
            <person name="Monk C."/>
            <person name="Brettin T."/>
            <person name="Detter J.C."/>
            <person name="Han C."/>
            <person name="Kuske C.R."/>
            <person name="Schmutz J."/>
            <person name="Larimer F."/>
            <person name="Land M."/>
            <person name="Hauser L."/>
            <person name="Kyrpides N."/>
            <person name="Mikhailova N."/>
            <person name="Vishnivetskaya T."/>
            <person name="Rodrigues D.F."/>
            <person name="Gilichinsky D."/>
            <person name="Tiedje J."/>
            <person name="Richardson P."/>
        </authorList>
    </citation>
    <scope>NUCLEOTIDE SEQUENCE [LARGE SCALE GENOMIC DNA]</scope>
    <source>
        <strain>DSM 17290 / CCUG 55495 / CIP 109462 / JCM 13490 / 255-15</strain>
    </source>
</reference>